<proteinExistence type="inferred from homology"/>
<organism>
    <name type="scientific">Brucella melitensis biotype 1 (strain ATCC 23456 / CCUG 17765 / NCTC 10094 / 16M)</name>
    <dbReference type="NCBI Taxonomy" id="224914"/>
    <lineage>
        <taxon>Bacteria</taxon>
        <taxon>Pseudomonadati</taxon>
        <taxon>Pseudomonadota</taxon>
        <taxon>Alphaproteobacteria</taxon>
        <taxon>Hyphomicrobiales</taxon>
        <taxon>Brucellaceae</taxon>
        <taxon>Brucella/Ochrobactrum group</taxon>
        <taxon>Brucella</taxon>
    </lineage>
</organism>
<gene>
    <name evidence="1" type="primary">sucC</name>
    <name type="ordered locus">BMEI0138</name>
</gene>
<sequence length="398" mass="42527">MNIHEYQAKRLLHTYGAPIANGVAVYSVEQAEEWAKTLPGPLYVVKSQIHAGGRGKGKFKELPADAKGGVRLAKSVEEVVANAKEMLGNTLVTKQTGEAGKQVNRLYIEDGADIERELYLSILIDRSVGRPAFVVSTEGGMDIEAVAEETPEKIVTVAIDPAKGVTDEDANKLADALKLEGGAREDGLKLFPILYKAFTEKDMSLLEINPLIVMTNGRVRVLDAKVSFDNNALFRHPDIVELRDLTEEDPKEIEASKYDLAYVALDGNIGCMVNGAGLAMATMDIIKLYGAEPANFLDVGGGASKEKVTAAFKIITADPAVEGILVNIFGGIMKCDVIAEGVIAAVKEVGLKVPLVVRLEGTNVELGKKIINESGLNVISADDLDDAAQKIVAAVKGN</sequence>
<evidence type="ECO:0000255" key="1">
    <source>
        <dbReference type="HAMAP-Rule" id="MF_00558"/>
    </source>
</evidence>
<reference key="1">
    <citation type="journal article" date="2002" name="Proc. Natl. Acad. Sci. U.S.A.">
        <title>The genome sequence of the facultative intracellular pathogen Brucella melitensis.</title>
        <authorList>
            <person name="DelVecchio V.G."/>
            <person name="Kapatral V."/>
            <person name="Redkar R.J."/>
            <person name="Patra G."/>
            <person name="Mujer C."/>
            <person name="Los T."/>
            <person name="Ivanova N."/>
            <person name="Anderson I."/>
            <person name="Bhattacharyya A."/>
            <person name="Lykidis A."/>
            <person name="Reznik G."/>
            <person name="Jablonski L."/>
            <person name="Larsen N."/>
            <person name="D'Souza M."/>
            <person name="Bernal A."/>
            <person name="Mazur M."/>
            <person name="Goltsman E."/>
            <person name="Selkov E."/>
            <person name="Elzer P.H."/>
            <person name="Hagius S."/>
            <person name="O'Callaghan D."/>
            <person name="Letesson J.-J."/>
            <person name="Haselkorn R."/>
            <person name="Kyrpides N.C."/>
            <person name="Overbeek R."/>
        </authorList>
    </citation>
    <scope>NUCLEOTIDE SEQUENCE [LARGE SCALE GENOMIC DNA]</scope>
    <source>
        <strain>ATCC 23456 / CCUG 17765 / NCTC 10094 / 16M</strain>
    </source>
</reference>
<comment type="function">
    <text evidence="1">Succinyl-CoA synthetase functions in the citric acid cycle (TCA), coupling the hydrolysis of succinyl-CoA to the synthesis of either ATP or GTP and thus represents the only step of substrate-level phosphorylation in the TCA. The beta subunit provides nucleotide specificity of the enzyme and binds the substrate succinate, while the binding sites for coenzyme A and phosphate are found in the alpha subunit.</text>
</comment>
<comment type="catalytic activity">
    <reaction evidence="1">
        <text>succinate + ATP + CoA = succinyl-CoA + ADP + phosphate</text>
        <dbReference type="Rhea" id="RHEA:17661"/>
        <dbReference type="ChEBI" id="CHEBI:30031"/>
        <dbReference type="ChEBI" id="CHEBI:30616"/>
        <dbReference type="ChEBI" id="CHEBI:43474"/>
        <dbReference type="ChEBI" id="CHEBI:57287"/>
        <dbReference type="ChEBI" id="CHEBI:57292"/>
        <dbReference type="ChEBI" id="CHEBI:456216"/>
        <dbReference type="EC" id="6.2.1.5"/>
    </reaction>
    <physiologicalReaction direction="right-to-left" evidence="1">
        <dbReference type="Rhea" id="RHEA:17663"/>
    </physiologicalReaction>
</comment>
<comment type="catalytic activity">
    <reaction evidence="1">
        <text>GTP + succinate + CoA = succinyl-CoA + GDP + phosphate</text>
        <dbReference type="Rhea" id="RHEA:22120"/>
        <dbReference type="ChEBI" id="CHEBI:30031"/>
        <dbReference type="ChEBI" id="CHEBI:37565"/>
        <dbReference type="ChEBI" id="CHEBI:43474"/>
        <dbReference type="ChEBI" id="CHEBI:57287"/>
        <dbReference type="ChEBI" id="CHEBI:57292"/>
        <dbReference type="ChEBI" id="CHEBI:58189"/>
    </reaction>
    <physiologicalReaction direction="right-to-left" evidence="1">
        <dbReference type="Rhea" id="RHEA:22122"/>
    </physiologicalReaction>
</comment>
<comment type="cofactor">
    <cofactor evidence="1">
        <name>Mg(2+)</name>
        <dbReference type="ChEBI" id="CHEBI:18420"/>
    </cofactor>
    <text evidence="1">Binds 1 Mg(2+) ion per subunit.</text>
</comment>
<comment type="pathway">
    <text evidence="1">Carbohydrate metabolism; tricarboxylic acid cycle; succinate from succinyl-CoA (ligase route): step 1/1.</text>
</comment>
<comment type="subunit">
    <text evidence="1">Heterotetramer of two alpha and two beta subunits.</text>
</comment>
<comment type="similarity">
    <text evidence="1">Belongs to the succinate/malate CoA ligase beta subunit family.</text>
</comment>
<feature type="chain" id="PRO_0000102820" description="Succinate--CoA ligase [ADP-forming] subunit beta">
    <location>
        <begin position="1"/>
        <end position="398"/>
    </location>
</feature>
<feature type="domain" description="ATP-grasp" evidence="1">
    <location>
        <begin position="9"/>
        <end position="254"/>
    </location>
</feature>
<feature type="binding site" evidence="1">
    <location>
        <position position="46"/>
    </location>
    <ligand>
        <name>ATP</name>
        <dbReference type="ChEBI" id="CHEBI:30616"/>
    </ligand>
</feature>
<feature type="binding site" evidence="1">
    <location>
        <begin position="53"/>
        <end position="55"/>
    </location>
    <ligand>
        <name>ATP</name>
        <dbReference type="ChEBI" id="CHEBI:30616"/>
    </ligand>
</feature>
<feature type="binding site" evidence="1">
    <location>
        <position position="109"/>
    </location>
    <ligand>
        <name>ATP</name>
        <dbReference type="ChEBI" id="CHEBI:30616"/>
    </ligand>
</feature>
<feature type="binding site" evidence="1">
    <location>
        <position position="112"/>
    </location>
    <ligand>
        <name>ATP</name>
        <dbReference type="ChEBI" id="CHEBI:30616"/>
    </ligand>
</feature>
<feature type="binding site" evidence="1">
    <location>
        <position position="117"/>
    </location>
    <ligand>
        <name>ATP</name>
        <dbReference type="ChEBI" id="CHEBI:30616"/>
    </ligand>
</feature>
<feature type="binding site" evidence="1">
    <location>
        <position position="209"/>
    </location>
    <ligand>
        <name>Mg(2+)</name>
        <dbReference type="ChEBI" id="CHEBI:18420"/>
    </ligand>
</feature>
<feature type="binding site" evidence="1">
    <location>
        <position position="223"/>
    </location>
    <ligand>
        <name>Mg(2+)</name>
        <dbReference type="ChEBI" id="CHEBI:18420"/>
    </ligand>
</feature>
<feature type="binding site" evidence="1">
    <location>
        <position position="274"/>
    </location>
    <ligand>
        <name>substrate</name>
        <note>ligand shared with subunit alpha</note>
    </ligand>
</feature>
<feature type="binding site" evidence="1">
    <location>
        <begin position="331"/>
        <end position="333"/>
    </location>
    <ligand>
        <name>substrate</name>
        <note>ligand shared with subunit alpha</note>
    </ligand>
</feature>
<protein>
    <recommendedName>
        <fullName evidence="1">Succinate--CoA ligase [ADP-forming] subunit beta</fullName>
        <ecNumber evidence="1">6.2.1.5</ecNumber>
    </recommendedName>
    <alternativeName>
        <fullName evidence="1">Succinyl-CoA synthetase subunit beta</fullName>
        <shortName evidence="1">SCS-beta</shortName>
    </alternativeName>
</protein>
<keyword id="KW-0067">ATP-binding</keyword>
<keyword id="KW-0436">Ligase</keyword>
<keyword id="KW-0460">Magnesium</keyword>
<keyword id="KW-0479">Metal-binding</keyword>
<keyword id="KW-0547">Nucleotide-binding</keyword>
<keyword id="KW-0816">Tricarboxylic acid cycle</keyword>
<name>SUCC_BRUME</name>
<accession>P66867</accession>
<accession>Q8YJE6</accession>
<dbReference type="EC" id="6.2.1.5" evidence="1"/>
<dbReference type="EMBL" id="AE008917">
    <property type="protein sequence ID" value="AAL51320.1"/>
    <property type="molecule type" value="Genomic_DNA"/>
</dbReference>
<dbReference type="PIR" id="AE3269">
    <property type="entry name" value="AE3269"/>
</dbReference>
<dbReference type="RefSeq" id="WP_002964994.1">
    <property type="nucleotide sequence ID" value="NZ_GG703778.1"/>
</dbReference>
<dbReference type="SMR" id="P66867"/>
<dbReference type="GeneID" id="97534788"/>
<dbReference type="KEGG" id="bme:BMEI0138"/>
<dbReference type="KEGG" id="bmel:DK63_1297"/>
<dbReference type="PATRIC" id="fig|224914.52.peg.1368"/>
<dbReference type="eggNOG" id="COG0045">
    <property type="taxonomic scope" value="Bacteria"/>
</dbReference>
<dbReference type="PhylomeDB" id="P66867"/>
<dbReference type="UniPathway" id="UPA00223">
    <property type="reaction ID" value="UER00999"/>
</dbReference>
<dbReference type="Proteomes" id="UP000000419">
    <property type="component" value="Chromosome I"/>
</dbReference>
<dbReference type="GO" id="GO:0005829">
    <property type="term" value="C:cytosol"/>
    <property type="evidence" value="ECO:0007669"/>
    <property type="project" value="TreeGrafter"/>
</dbReference>
<dbReference type="GO" id="GO:0042709">
    <property type="term" value="C:succinate-CoA ligase complex"/>
    <property type="evidence" value="ECO:0007669"/>
    <property type="project" value="TreeGrafter"/>
</dbReference>
<dbReference type="GO" id="GO:0005524">
    <property type="term" value="F:ATP binding"/>
    <property type="evidence" value="ECO:0007669"/>
    <property type="project" value="UniProtKB-UniRule"/>
</dbReference>
<dbReference type="GO" id="GO:0000287">
    <property type="term" value="F:magnesium ion binding"/>
    <property type="evidence" value="ECO:0007669"/>
    <property type="project" value="UniProtKB-UniRule"/>
</dbReference>
<dbReference type="GO" id="GO:0004775">
    <property type="term" value="F:succinate-CoA ligase (ADP-forming) activity"/>
    <property type="evidence" value="ECO:0007669"/>
    <property type="project" value="UniProtKB-UniRule"/>
</dbReference>
<dbReference type="GO" id="GO:0004776">
    <property type="term" value="F:succinate-CoA ligase (GDP-forming) activity"/>
    <property type="evidence" value="ECO:0007669"/>
    <property type="project" value="RHEA"/>
</dbReference>
<dbReference type="GO" id="GO:0006104">
    <property type="term" value="P:succinyl-CoA metabolic process"/>
    <property type="evidence" value="ECO:0007669"/>
    <property type="project" value="TreeGrafter"/>
</dbReference>
<dbReference type="GO" id="GO:0006099">
    <property type="term" value="P:tricarboxylic acid cycle"/>
    <property type="evidence" value="ECO:0007669"/>
    <property type="project" value="UniProtKB-UniRule"/>
</dbReference>
<dbReference type="FunFam" id="3.30.1490.20:FF:000002">
    <property type="entry name" value="Succinate--CoA ligase [ADP-forming] subunit beta"/>
    <property type="match status" value="1"/>
</dbReference>
<dbReference type="FunFam" id="3.30.470.20:FF:000002">
    <property type="entry name" value="Succinate--CoA ligase [ADP-forming] subunit beta"/>
    <property type="match status" value="1"/>
</dbReference>
<dbReference type="FunFam" id="3.40.50.261:FF:000001">
    <property type="entry name" value="Succinate--CoA ligase [ADP-forming] subunit beta"/>
    <property type="match status" value="1"/>
</dbReference>
<dbReference type="Gene3D" id="3.30.1490.20">
    <property type="entry name" value="ATP-grasp fold, A domain"/>
    <property type="match status" value="1"/>
</dbReference>
<dbReference type="Gene3D" id="3.30.470.20">
    <property type="entry name" value="ATP-grasp fold, B domain"/>
    <property type="match status" value="1"/>
</dbReference>
<dbReference type="Gene3D" id="3.40.50.261">
    <property type="entry name" value="Succinyl-CoA synthetase domains"/>
    <property type="match status" value="1"/>
</dbReference>
<dbReference type="HAMAP" id="MF_00558">
    <property type="entry name" value="Succ_CoA_beta"/>
    <property type="match status" value="1"/>
</dbReference>
<dbReference type="InterPro" id="IPR011761">
    <property type="entry name" value="ATP-grasp"/>
</dbReference>
<dbReference type="InterPro" id="IPR013650">
    <property type="entry name" value="ATP-grasp_succ-CoA_synth-type"/>
</dbReference>
<dbReference type="InterPro" id="IPR013815">
    <property type="entry name" value="ATP_grasp_subdomain_1"/>
</dbReference>
<dbReference type="InterPro" id="IPR017866">
    <property type="entry name" value="Succ-CoA_synthase_bsu_CS"/>
</dbReference>
<dbReference type="InterPro" id="IPR005811">
    <property type="entry name" value="SUCC_ACL_C"/>
</dbReference>
<dbReference type="InterPro" id="IPR005809">
    <property type="entry name" value="Succ_CoA_ligase-like_bsu"/>
</dbReference>
<dbReference type="InterPro" id="IPR016102">
    <property type="entry name" value="Succinyl-CoA_synth-like"/>
</dbReference>
<dbReference type="NCBIfam" id="NF001913">
    <property type="entry name" value="PRK00696.1"/>
    <property type="match status" value="1"/>
</dbReference>
<dbReference type="NCBIfam" id="TIGR01016">
    <property type="entry name" value="sucCoAbeta"/>
    <property type="match status" value="1"/>
</dbReference>
<dbReference type="PANTHER" id="PTHR11815:SF10">
    <property type="entry name" value="SUCCINATE--COA LIGASE [GDP-FORMING] SUBUNIT BETA, MITOCHONDRIAL"/>
    <property type="match status" value="1"/>
</dbReference>
<dbReference type="PANTHER" id="PTHR11815">
    <property type="entry name" value="SUCCINYL-COA SYNTHETASE BETA CHAIN"/>
    <property type="match status" value="1"/>
</dbReference>
<dbReference type="Pfam" id="PF08442">
    <property type="entry name" value="ATP-grasp_2"/>
    <property type="match status" value="1"/>
</dbReference>
<dbReference type="Pfam" id="PF00549">
    <property type="entry name" value="Ligase_CoA"/>
    <property type="match status" value="1"/>
</dbReference>
<dbReference type="PIRSF" id="PIRSF001554">
    <property type="entry name" value="SucCS_beta"/>
    <property type="match status" value="1"/>
</dbReference>
<dbReference type="SUPFAM" id="SSF56059">
    <property type="entry name" value="Glutathione synthetase ATP-binding domain-like"/>
    <property type="match status" value="1"/>
</dbReference>
<dbReference type="SUPFAM" id="SSF52210">
    <property type="entry name" value="Succinyl-CoA synthetase domains"/>
    <property type="match status" value="1"/>
</dbReference>
<dbReference type="PROSITE" id="PS50975">
    <property type="entry name" value="ATP_GRASP"/>
    <property type="match status" value="1"/>
</dbReference>
<dbReference type="PROSITE" id="PS01217">
    <property type="entry name" value="SUCCINYL_COA_LIG_3"/>
    <property type="match status" value="1"/>
</dbReference>